<reference key="1">
    <citation type="submission" date="2007-04" db="EMBL/GenBank/DDBJ databases">
        <title>Complete sequence of Shewanella putrefaciens CN-32.</title>
        <authorList>
            <consortium name="US DOE Joint Genome Institute"/>
            <person name="Copeland A."/>
            <person name="Lucas S."/>
            <person name="Lapidus A."/>
            <person name="Barry K."/>
            <person name="Detter J.C."/>
            <person name="Glavina del Rio T."/>
            <person name="Hammon N."/>
            <person name="Israni S."/>
            <person name="Dalin E."/>
            <person name="Tice H."/>
            <person name="Pitluck S."/>
            <person name="Chain P."/>
            <person name="Malfatti S."/>
            <person name="Shin M."/>
            <person name="Vergez L."/>
            <person name="Schmutz J."/>
            <person name="Larimer F."/>
            <person name="Land M."/>
            <person name="Hauser L."/>
            <person name="Kyrpides N."/>
            <person name="Mikhailova N."/>
            <person name="Romine M.F."/>
            <person name="Fredrickson J."/>
            <person name="Tiedje J."/>
            <person name="Richardson P."/>
        </authorList>
    </citation>
    <scope>NUCLEOTIDE SEQUENCE [LARGE SCALE GENOMIC DNA]</scope>
    <source>
        <strain>CN-32 / ATCC BAA-453</strain>
    </source>
</reference>
<organism>
    <name type="scientific">Shewanella putrefaciens (strain CN-32 / ATCC BAA-453)</name>
    <dbReference type="NCBI Taxonomy" id="319224"/>
    <lineage>
        <taxon>Bacteria</taxon>
        <taxon>Pseudomonadati</taxon>
        <taxon>Pseudomonadota</taxon>
        <taxon>Gammaproteobacteria</taxon>
        <taxon>Alteromonadales</taxon>
        <taxon>Shewanellaceae</taxon>
        <taxon>Shewanella</taxon>
    </lineage>
</organism>
<proteinExistence type="inferred from homology"/>
<keyword id="KW-0255">Endonuclease</keyword>
<keyword id="KW-0378">Hydrolase</keyword>
<keyword id="KW-0540">Nuclease</keyword>
<keyword id="KW-0694">RNA-binding</keyword>
<keyword id="KW-0699">rRNA-binding</keyword>
<sequence>MNKDDDKEGLAMFSALIDGIKPITQDKRHFRTPLKTKQEIALKEQQLHANSYFSDTYQPLLPIQGPMRWLDDGVDSLELKRLRRGDYQPDLLLDLHGYRQSEAKLELVALIQACVKQQSQCCCVMHGYGSGILKQQVPMWLVQHPMVKAFHQAPKEWGGDAALLVLIDLGELPHRR</sequence>
<comment type="function">
    <text evidence="1">Acts as a ribosome collision sensor. Detects stalled/collided disomes (pairs of ribosomes where the leading ribosome is stalled and a second ribosome has collided with it) and endonucleolytically cleaves mRNA at the 5' boundary of the stalled ribosome. Stalled/collided disomes form a new interface (primarily via the 30S subunits) that binds SmrB. Cleaved mRNA becomes available for tmRNA ligation, leading to ribosomal subunit dissociation and rescue of stalled ribosomes.</text>
</comment>
<comment type="subunit">
    <text evidence="1">Associates with collided ribosomes, but not with correctly translating polysomes.</text>
</comment>
<comment type="similarity">
    <text evidence="1">Belongs to the SmrB family.</text>
</comment>
<dbReference type="EC" id="3.1.-.-" evidence="1"/>
<dbReference type="EMBL" id="CP000681">
    <property type="protein sequence ID" value="ABP76174.1"/>
    <property type="molecule type" value="Genomic_DNA"/>
</dbReference>
<dbReference type="SMR" id="A4Y891"/>
<dbReference type="STRING" id="319224.Sputcn32_2453"/>
<dbReference type="KEGG" id="spc:Sputcn32_2453"/>
<dbReference type="eggNOG" id="COG2840">
    <property type="taxonomic scope" value="Bacteria"/>
</dbReference>
<dbReference type="HOGENOM" id="CLU_055978_4_0_6"/>
<dbReference type="GO" id="GO:0004521">
    <property type="term" value="F:RNA endonuclease activity"/>
    <property type="evidence" value="ECO:0007669"/>
    <property type="project" value="UniProtKB-UniRule"/>
</dbReference>
<dbReference type="GO" id="GO:0019843">
    <property type="term" value="F:rRNA binding"/>
    <property type="evidence" value="ECO:0007669"/>
    <property type="project" value="UniProtKB-UniRule"/>
</dbReference>
<dbReference type="GO" id="GO:0072344">
    <property type="term" value="P:rescue of stalled ribosome"/>
    <property type="evidence" value="ECO:0007669"/>
    <property type="project" value="UniProtKB-UniRule"/>
</dbReference>
<dbReference type="Gene3D" id="3.30.1370.110">
    <property type="match status" value="1"/>
</dbReference>
<dbReference type="HAMAP" id="MF_01042">
    <property type="entry name" value="SmrB"/>
    <property type="match status" value="1"/>
</dbReference>
<dbReference type="InterPro" id="IPR002625">
    <property type="entry name" value="Smr_dom"/>
</dbReference>
<dbReference type="InterPro" id="IPR036063">
    <property type="entry name" value="Smr_dom_sf"/>
</dbReference>
<dbReference type="InterPro" id="IPR022990">
    <property type="entry name" value="SmrB-like"/>
</dbReference>
<dbReference type="NCBIfam" id="NF003432">
    <property type="entry name" value="PRK04946.1"/>
    <property type="match status" value="1"/>
</dbReference>
<dbReference type="PANTHER" id="PTHR35562">
    <property type="entry name" value="DNA ENDONUCLEASE SMRA-RELATED"/>
    <property type="match status" value="1"/>
</dbReference>
<dbReference type="PANTHER" id="PTHR35562:SF1">
    <property type="entry name" value="UPF0115 PROTEIN YFCN"/>
    <property type="match status" value="1"/>
</dbReference>
<dbReference type="Pfam" id="PF01713">
    <property type="entry name" value="Smr"/>
    <property type="match status" value="1"/>
</dbReference>
<dbReference type="SMART" id="SM00463">
    <property type="entry name" value="SMR"/>
    <property type="match status" value="1"/>
</dbReference>
<dbReference type="SUPFAM" id="SSF160443">
    <property type="entry name" value="SMR domain-like"/>
    <property type="match status" value="1"/>
</dbReference>
<dbReference type="PROSITE" id="PS50828">
    <property type="entry name" value="SMR"/>
    <property type="match status" value="1"/>
</dbReference>
<protein>
    <recommendedName>
        <fullName evidence="1">Ribosome rescue factor SmrB</fullName>
        <ecNumber evidence="1">3.1.-.-</ecNumber>
    </recommendedName>
</protein>
<feature type="chain" id="PRO_1000084361" description="Ribosome rescue factor SmrB">
    <location>
        <begin position="1"/>
        <end position="176"/>
    </location>
</feature>
<feature type="domain" description="Smr" evidence="1">
    <location>
        <begin position="93"/>
        <end position="168"/>
    </location>
</feature>
<accession>A4Y891</accession>
<gene>
    <name evidence="1" type="primary">smrB</name>
    <name type="ordered locus">Sputcn32_2453</name>
</gene>
<name>SMRB_SHEPC</name>
<evidence type="ECO:0000255" key="1">
    <source>
        <dbReference type="HAMAP-Rule" id="MF_01042"/>
    </source>
</evidence>